<protein>
    <recommendedName>
        <fullName evidence="1">Chorismate synthase</fullName>
        <shortName evidence="1">CS</shortName>
        <ecNumber evidence="1">4.2.3.5</ecNumber>
    </recommendedName>
    <alternativeName>
        <fullName evidence="1">5-enolpyruvylshikimate-3-phosphate phospholyase</fullName>
    </alternativeName>
</protein>
<feature type="chain" id="PRO_1000115370" description="Chorismate synthase">
    <location>
        <begin position="1"/>
        <end position="366"/>
    </location>
</feature>
<feature type="binding site" evidence="1">
    <location>
        <position position="48"/>
    </location>
    <ligand>
        <name>NADP(+)</name>
        <dbReference type="ChEBI" id="CHEBI:58349"/>
    </ligand>
</feature>
<feature type="binding site" evidence="1">
    <location>
        <position position="54"/>
    </location>
    <ligand>
        <name>NADP(+)</name>
        <dbReference type="ChEBI" id="CHEBI:58349"/>
    </ligand>
</feature>
<feature type="binding site" evidence="1">
    <location>
        <begin position="132"/>
        <end position="134"/>
    </location>
    <ligand>
        <name>FMN</name>
        <dbReference type="ChEBI" id="CHEBI:58210"/>
    </ligand>
</feature>
<feature type="binding site" evidence="1">
    <location>
        <begin position="244"/>
        <end position="245"/>
    </location>
    <ligand>
        <name>FMN</name>
        <dbReference type="ChEBI" id="CHEBI:58210"/>
    </ligand>
</feature>
<feature type="binding site" evidence="1">
    <location>
        <position position="289"/>
    </location>
    <ligand>
        <name>FMN</name>
        <dbReference type="ChEBI" id="CHEBI:58210"/>
    </ligand>
</feature>
<feature type="binding site" evidence="1">
    <location>
        <begin position="304"/>
        <end position="308"/>
    </location>
    <ligand>
        <name>FMN</name>
        <dbReference type="ChEBI" id="CHEBI:58210"/>
    </ligand>
</feature>
<feature type="binding site" evidence="1">
    <location>
        <position position="330"/>
    </location>
    <ligand>
        <name>FMN</name>
        <dbReference type="ChEBI" id="CHEBI:58210"/>
    </ligand>
</feature>
<comment type="function">
    <text evidence="1">Catalyzes the anti-1,4-elimination of the C-3 phosphate and the C-6 proR hydrogen from 5-enolpyruvylshikimate-3-phosphate (EPSP) to yield chorismate, which is the branch point compound that serves as the starting substrate for the three terminal pathways of aromatic amino acid biosynthesis. This reaction introduces a second double bond into the aromatic ring system.</text>
</comment>
<comment type="catalytic activity">
    <reaction evidence="1">
        <text>5-O-(1-carboxyvinyl)-3-phosphoshikimate = chorismate + phosphate</text>
        <dbReference type="Rhea" id="RHEA:21020"/>
        <dbReference type="ChEBI" id="CHEBI:29748"/>
        <dbReference type="ChEBI" id="CHEBI:43474"/>
        <dbReference type="ChEBI" id="CHEBI:57701"/>
        <dbReference type="EC" id="4.2.3.5"/>
    </reaction>
</comment>
<comment type="cofactor">
    <cofactor evidence="1">
        <name>FMNH2</name>
        <dbReference type="ChEBI" id="CHEBI:57618"/>
    </cofactor>
    <text evidence="1">Reduced FMN (FMNH(2)).</text>
</comment>
<comment type="pathway">
    <text evidence="1">Metabolic intermediate biosynthesis; chorismate biosynthesis; chorismate from D-erythrose 4-phosphate and phosphoenolpyruvate: step 7/7.</text>
</comment>
<comment type="subunit">
    <text evidence="1">Homotetramer.</text>
</comment>
<comment type="similarity">
    <text evidence="1">Belongs to the chorismate synthase family.</text>
</comment>
<organism>
    <name type="scientific">Methylorubrum populi (strain ATCC BAA-705 / NCIMB 13946 / BJ001)</name>
    <name type="common">Methylobacterium populi</name>
    <dbReference type="NCBI Taxonomy" id="441620"/>
    <lineage>
        <taxon>Bacteria</taxon>
        <taxon>Pseudomonadati</taxon>
        <taxon>Pseudomonadota</taxon>
        <taxon>Alphaproteobacteria</taxon>
        <taxon>Hyphomicrobiales</taxon>
        <taxon>Methylobacteriaceae</taxon>
        <taxon>Methylorubrum</taxon>
    </lineage>
</organism>
<gene>
    <name evidence="1" type="primary">aroC</name>
    <name type="ordered locus">Mpop_3176</name>
</gene>
<proteinExistence type="inferred from homology"/>
<evidence type="ECO:0000255" key="1">
    <source>
        <dbReference type="HAMAP-Rule" id="MF_00300"/>
    </source>
</evidence>
<dbReference type="EC" id="4.2.3.5" evidence="1"/>
<dbReference type="EMBL" id="CP001029">
    <property type="protein sequence ID" value="ACB81328.1"/>
    <property type="molecule type" value="Genomic_DNA"/>
</dbReference>
<dbReference type="RefSeq" id="WP_012455045.1">
    <property type="nucleotide sequence ID" value="NC_010725.1"/>
</dbReference>
<dbReference type="SMR" id="B1ZHL0"/>
<dbReference type="STRING" id="441620.Mpop_3176"/>
<dbReference type="KEGG" id="mpo:Mpop_3176"/>
<dbReference type="eggNOG" id="COG0082">
    <property type="taxonomic scope" value="Bacteria"/>
</dbReference>
<dbReference type="HOGENOM" id="CLU_034547_0_0_5"/>
<dbReference type="OrthoDB" id="9771806at2"/>
<dbReference type="UniPathway" id="UPA00053">
    <property type="reaction ID" value="UER00090"/>
</dbReference>
<dbReference type="Proteomes" id="UP000007136">
    <property type="component" value="Chromosome"/>
</dbReference>
<dbReference type="GO" id="GO:0005829">
    <property type="term" value="C:cytosol"/>
    <property type="evidence" value="ECO:0007669"/>
    <property type="project" value="TreeGrafter"/>
</dbReference>
<dbReference type="GO" id="GO:0004107">
    <property type="term" value="F:chorismate synthase activity"/>
    <property type="evidence" value="ECO:0007669"/>
    <property type="project" value="UniProtKB-UniRule"/>
</dbReference>
<dbReference type="GO" id="GO:0010181">
    <property type="term" value="F:FMN binding"/>
    <property type="evidence" value="ECO:0007669"/>
    <property type="project" value="TreeGrafter"/>
</dbReference>
<dbReference type="GO" id="GO:0008652">
    <property type="term" value="P:amino acid biosynthetic process"/>
    <property type="evidence" value="ECO:0007669"/>
    <property type="project" value="UniProtKB-KW"/>
</dbReference>
<dbReference type="GO" id="GO:0009073">
    <property type="term" value="P:aromatic amino acid family biosynthetic process"/>
    <property type="evidence" value="ECO:0007669"/>
    <property type="project" value="UniProtKB-KW"/>
</dbReference>
<dbReference type="GO" id="GO:0009423">
    <property type="term" value="P:chorismate biosynthetic process"/>
    <property type="evidence" value="ECO:0007669"/>
    <property type="project" value="UniProtKB-UniRule"/>
</dbReference>
<dbReference type="CDD" id="cd07304">
    <property type="entry name" value="Chorismate_synthase"/>
    <property type="match status" value="1"/>
</dbReference>
<dbReference type="Gene3D" id="3.60.150.10">
    <property type="entry name" value="Chorismate synthase AroC"/>
    <property type="match status" value="1"/>
</dbReference>
<dbReference type="HAMAP" id="MF_00300">
    <property type="entry name" value="Chorismate_synth"/>
    <property type="match status" value="1"/>
</dbReference>
<dbReference type="InterPro" id="IPR000453">
    <property type="entry name" value="Chorismate_synth"/>
</dbReference>
<dbReference type="InterPro" id="IPR035904">
    <property type="entry name" value="Chorismate_synth_AroC_sf"/>
</dbReference>
<dbReference type="InterPro" id="IPR020541">
    <property type="entry name" value="Chorismate_synthase_CS"/>
</dbReference>
<dbReference type="NCBIfam" id="TIGR00033">
    <property type="entry name" value="aroC"/>
    <property type="match status" value="1"/>
</dbReference>
<dbReference type="NCBIfam" id="NF003793">
    <property type="entry name" value="PRK05382.1"/>
    <property type="match status" value="1"/>
</dbReference>
<dbReference type="PANTHER" id="PTHR21085">
    <property type="entry name" value="CHORISMATE SYNTHASE"/>
    <property type="match status" value="1"/>
</dbReference>
<dbReference type="PANTHER" id="PTHR21085:SF0">
    <property type="entry name" value="CHORISMATE SYNTHASE"/>
    <property type="match status" value="1"/>
</dbReference>
<dbReference type="Pfam" id="PF01264">
    <property type="entry name" value="Chorismate_synt"/>
    <property type="match status" value="1"/>
</dbReference>
<dbReference type="PIRSF" id="PIRSF001456">
    <property type="entry name" value="Chorismate_synth"/>
    <property type="match status" value="1"/>
</dbReference>
<dbReference type="SUPFAM" id="SSF103263">
    <property type="entry name" value="Chorismate synthase, AroC"/>
    <property type="match status" value="1"/>
</dbReference>
<dbReference type="PROSITE" id="PS00787">
    <property type="entry name" value="CHORISMATE_SYNTHASE_1"/>
    <property type="match status" value="1"/>
</dbReference>
<dbReference type="PROSITE" id="PS00788">
    <property type="entry name" value="CHORISMATE_SYNTHASE_2"/>
    <property type="match status" value="1"/>
</dbReference>
<dbReference type="PROSITE" id="PS00789">
    <property type="entry name" value="CHORISMATE_SYNTHASE_3"/>
    <property type="match status" value="1"/>
</dbReference>
<name>AROC_METPB</name>
<accession>B1ZHL0</accession>
<keyword id="KW-0028">Amino-acid biosynthesis</keyword>
<keyword id="KW-0057">Aromatic amino acid biosynthesis</keyword>
<keyword id="KW-0274">FAD</keyword>
<keyword id="KW-0285">Flavoprotein</keyword>
<keyword id="KW-0288">FMN</keyword>
<keyword id="KW-0456">Lyase</keyword>
<keyword id="KW-0521">NADP</keyword>
<sequence>MSHNTFGHLFRVTTFGESHGVALGCVVDGCPPGLALEAEEIQAELDRRKPGQSRFTTQRREPDQVKILSGVFGDDRTGGRQLTTGTPIALMIENTDQRSKDYSEIRDSYRPGHADYTYDAKYGFRDYRGGGRSSARETAARVAAGAIARKVIPGITIRAALVQMGPHAIDRANWDWAEVGNNPFFCPDAKAAALYESYLDGIRKDGSSVGAVIEVIAEGVPPGLGAPIYGKLDADLAAAMMSINAVKGVEIGDGFAAAALRGEDNADEMRAGNDGRPRFLGNHAGGILGGISSGEPIVVRFAVKPTSSILTPRQSVNRQGEEIDLVTKGRHDPCVGIRAVPVAEAMMACVLADHHLRHRGQVGDRV</sequence>
<reference key="1">
    <citation type="submission" date="2008-04" db="EMBL/GenBank/DDBJ databases">
        <title>Complete sequence of chromosome of Methylobacterium populi BJ001.</title>
        <authorList>
            <consortium name="US DOE Joint Genome Institute"/>
            <person name="Copeland A."/>
            <person name="Lucas S."/>
            <person name="Lapidus A."/>
            <person name="Glavina del Rio T."/>
            <person name="Dalin E."/>
            <person name="Tice H."/>
            <person name="Bruce D."/>
            <person name="Goodwin L."/>
            <person name="Pitluck S."/>
            <person name="Chertkov O."/>
            <person name="Brettin T."/>
            <person name="Detter J.C."/>
            <person name="Han C."/>
            <person name="Kuske C.R."/>
            <person name="Schmutz J."/>
            <person name="Larimer F."/>
            <person name="Land M."/>
            <person name="Hauser L."/>
            <person name="Kyrpides N."/>
            <person name="Mikhailova N."/>
            <person name="Marx C."/>
            <person name="Richardson P."/>
        </authorList>
    </citation>
    <scope>NUCLEOTIDE SEQUENCE [LARGE SCALE GENOMIC DNA]</scope>
    <source>
        <strain>ATCC BAA-705 / NCIMB 13946 / BJ001</strain>
    </source>
</reference>